<keyword id="KW-0687">Ribonucleoprotein</keyword>
<keyword id="KW-0689">Ribosomal protein</keyword>
<comment type="subunit">
    <text evidence="1">Part of the 50S ribosomal subunit. Contacts protein L32.</text>
</comment>
<comment type="similarity">
    <text evidence="1">Belongs to the bacterial ribosomal protein bL17 family.</text>
</comment>
<gene>
    <name evidence="1" type="primary">rplQ</name>
    <name type="ordered locus">PsycPRwf_0451</name>
</gene>
<reference key="1">
    <citation type="submission" date="2007-05" db="EMBL/GenBank/DDBJ databases">
        <title>Complete sequence of chromosome of Psychrobacter sp. PRwf-1.</title>
        <authorList>
            <consortium name="US DOE Joint Genome Institute"/>
            <person name="Copeland A."/>
            <person name="Lucas S."/>
            <person name="Lapidus A."/>
            <person name="Barry K."/>
            <person name="Detter J.C."/>
            <person name="Glavina del Rio T."/>
            <person name="Hammon N."/>
            <person name="Israni S."/>
            <person name="Dalin E."/>
            <person name="Tice H."/>
            <person name="Pitluck S."/>
            <person name="Chain P."/>
            <person name="Malfatti S."/>
            <person name="Shin M."/>
            <person name="Vergez L."/>
            <person name="Schmutz J."/>
            <person name="Larimer F."/>
            <person name="Land M."/>
            <person name="Hauser L."/>
            <person name="Kyrpides N."/>
            <person name="Kim E."/>
            <person name="Tiedje J."/>
            <person name="Richardson P."/>
        </authorList>
    </citation>
    <scope>NUCLEOTIDE SEQUENCE [LARGE SCALE GENOMIC DNA]</scope>
    <source>
        <strain>PRwf-1</strain>
    </source>
</reference>
<sequence>MRHRKSGVKLGRTGSHRKAMFQNMTNSLFEHELIKTTLPKAKELRRVAEPLITLAKEDSVANRRLAFSRMRNKNMVGKLFGTLAPRYQARPGGYIRIIKCGNRDGDNAPMAYVELVDRD</sequence>
<protein>
    <recommendedName>
        <fullName evidence="1">Large ribosomal subunit protein bL17</fullName>
    </recommendedName>
    <alternativeName>
        <fullName evidence="2">50S ribosomal protein L17</fullName>
    </alternativeName>
</protein>
<evidence type="ECO:0000255" key="1">
    <source>
        <dbReference type="HAMAP-Rule" id="MF_01368"/>
    </source>
</evidence>
<evidence type="ECO:0000305" key="2"/>
<feature type="chain" id="PRO_1000073436" description="Large ribosomal subunit protein bL17">
    <location>
        <begin position="1"/>
        <end position="119"/>
    </location>
</feature>
<organism>
    <name type="scientific">Psychrobacter sp. (strain PRwf-1)</name>
    <dbReference type="NCBI Taxonomy" id="349106"/>
    <lineage>
        <taxon>Bacteria</taxon>
        <taxon>Pseudomonadati</taxon>
        <taxon>Pseudomonadota</taxon>
        <taxon>Gammaproteobacteria</taxon>
        <taxon>Moraxellales</taxon>
        <taxon>Moraxellaceae</taxon>
        <taxon>Psychrobacter</taxon>
    </lineage>
</organism>
<dbReference type="EMBL" id="CP000713">
    <property type="protein sequence ID" value="ABQ93406.1"/>
    <property type="molecule type" value="Genomic_DNA"/>
</dbReference>
<dbReference type="SMR" id="A5WCL5"/>
<dbReference type="STRING" id="349106.PsycPRwf_0451"/>
<dbReference type="KEGG" id="prw:PsycPRwf_0451"/>
<dbReference type="eggNOG" id="COG0203">
    <property type="taxonomic scope" value="Bacteria"/>
</dbReference>
<dbReference type="HOGENOM" id="CLU_074407_2_0_6"/>
<dbReference type="GO" id="GO:0022625">
    <property type="term" value="C:cytosolic large ribosomal subunit"/>
    <property type="evidence" value="ECO:0007669"/>
    <property type="project" value="TreeGrafter"/>
</dbReference>
<dbReference type="GO" id="GO:0003735">
    <property type="term" value="F:structural constituent of ribosome"/>
    <property type="evidence" value="ECO:0007669"/>
    <property type="project" value="InterPro"/>
</dbReference>
<dbReference type="GO" id="GO:0006412">
    <property type="term" value="P:translation"/>
    <property type="evidence" value="ECO:0007669"/>
    <property type="project" value="UniProtKB-UniRule"/>
</dbReference>
<dbReference type="FunFam" id="3.90.1030.10:FF:000001">
    <property type="entry name" value="50S ribosomal protein L17"/>
    <property type="match status" value="1"/>
</dbReference>
<dbReference type="Gene3D" id="3.90.1030.10">
    <property type="entry name" value="Ribosomal protein L17"/>
    <property type="match status" value="1"/>
</dbReference>
<dbReference type="HAMAP" id="MF_01368">
    <property type="entry name" value="Ribosomal_bL17"/>
    <property type="match status" value="1"/>
</dbReference>
<dbReference type="InterPro" id="IPR000456">
    <property type="entry name" value="Ribosomal_bL17"/>
</dbReference>
<dbReference type="InterPro" id="IPR047859">
    <property type="entry name" value="Ribosomal_bL17_CS"/>
</dbReference>
<dbReference type="InterPro" id="IPR036373">
    <property type="entry name" value="Ribosomal_bL17_sf"/>
</dbReference>
<dbReference type="NCBIfam" id="TIGR00059">
    <property type="entry name" value="L17"/>
    <property type="match status" value="1"/>
</dbReference>
<dbReference type="PANTHER" id="PTHR14413:SF16">
    <property type="entry name" value="LARGE RIBOSOMAL SUBUNIT PROTEIN BL17M"/>
    <property type="match status" value="1"/>
</dbReference>
<dbReference type="PANTHER" id="PTHR14413">
    <property type="entry name" value="RIBOSOMAL PROTEIN L17"/>
    <property type="match status" value="1"/>
</dbReference>
<dbReference type="Pfam" id="PF01196">
    <property type="entry name" value="Ribosomal_L17"/>
    <property type="match status" value="1"/>
</dbReference>
<dbReference type="SUPFAM" id="SSF64263">
    <property type="entry name" value="Prokaryotic ribosomal protein L17"/>
    <property type="match status" value="1"/>
</dbReference>
<dbReference type="PROSITE" id="PS01167">
    <property type="entry name" value="RIBOSOMAL_L17"/>
    <property type="match status" value="1"/>
</dbReference>
<proteinExistence type="inferred from homology"/>
<accession>A5WCL5</accession>
<name>RL17_PSYWF</name>